<comment type="function">
    <text evidence="1">Component of the acetyl coenzyme A carboxylase (ACC) complex. Biotin carboxylase (BC) catalyzes the carboxylation of biotin on its carrier protein (BCCP) and then the CO(2) group is transferred by the transcarboxylase to acetyl-CoA to form malonyl-CoA.</text>
</comment>
<comment type="catalytic activity">
    <reaction evidence="1">
        <text>N(6)-carboxybiotinyl-L-lysyl-[protein] + acetyl-CoA = N(6)-biotinyl-L-lysyl-[protein] + malonyl-CoA</text>
        <dbReference type="Rhea" id="RHEA:54728"/>
        <dbReference type="Rhea" id="RHEA-COMP:10505"/>
        <dbReference type="Rhea" id="RHEA-COMP:10506"/>
        <dbReference type="ChEBI" id="CHEBI:57288"/>
        <dbReference type="ChEBI" id="CHEBI:57384"/>
        <dbReference type="ChEBI" id="CHEBI:83144"/>
        <dbReference type="ChEBI" id="CHEBI:83145"/>
        <dbReference type="EC" id="2.1.3.15"/>
    </reaction>
</comment>
<comment type="cofactor">
    <cofactor evidence="1">
        <name>Zn(2+)</name>
        <dbReference type="ChEBI" id="CHEBI:29105"/>
    </cofactor>
    <text evidence="1">Binds 1 zinc ion per subunit.</text>
</comment>
<comment type="pathway">
    <text evidence="1">Lipid metabolism; malonyl-CoA biosynthesis; malonyl-CoA from acetyl-CoA: step 1/1.</text>
</comment>
<comment type="subunit">
    <text evidence="1">Acetyl-CoA carboxylase is a heterohexamer composed of biotin carboxyl carrier protein (AccB), biotin carboxylase (AccC) and two subunits each of ACCase subunit alpha (AccA) and ACCase subunit beta (AccD).</text>
</comment>
<comment type="subcellular location">
    <subcellularLocation>
        <location evidence="1">Cytoplasm</location>
    </subcellularLocation>
</comment>
<comment type="similarity">
    <text evidence="1">Belongs to the AccD/PCCB family.</text>
</comment>
<protein>
    <recommendedName>
        <fullName evidence="1">Acetyl-coenzyme A carboxylase carboxyl transferase subunit beta</fullName>
        <shortName evidence="1">ACCase subunit beta</shortName>
        <shortName evidence="1">Acetyl-CoA carboxylase carboxyltransferase subunit beta</shortName>
        <ecNumber evidence="1">2.1.3.15</ecNumber>
    </recommendedName>
</protein>
<dbReference type="EC" id="2.1.3.15" evidence="1"/>
<dbReference type="EMBL" id="AE004092">
    <property type="protein sequence ID" value="AAK34488.1"/>
    <property type="molecule type" value="Genomic_DNA"/>
</dbReference>
<dbReference type="EMBL" id="CP000017">
    <property type="protein sequence ID" value="AAZ52103.1"/>
    <property type="molecule type" value="Genomic_DNA"/>
</dbReference>
<dbReference type="RefSeq" id="NP_269767.1">
    <property type="nucleotide sequence ID" value="NC_002737.2"/>
</dbReference>
<dbReference type="SMR" id="Q99YE0"/>
<dbReference type="PaxDb" id="1314-HKU360_01540"/>
<dbReference type="KEGG" id="spy:SPy_1744"/>
<dbReference type="KEGG" id="spz:M5005_Spy1485"/>
<dbReference type="PATRIC" id="fig|160490.10.peg.1518"/>
<dbReference type="HOGENOM" id="CLU_015486_1_1_9"/>
<dbReference type="OMA" id="PEGLWIK"/>
<dbReference type="UniPathway" id="UPA00655">
    <property type="reaction ID" value="UER00711"/>
</dbReference>
<dbReference type="Proteomes" id="UP000000750">
    <property type="component" value="Chromosome"/>
</dbReference>
<dbReference type="GO" id="GO:0009317">
    <property type="term" value="C:acetyl-CoA carboxylase complex"/>
    <property type="evidence" value="ECO:0007669"/>
    <property type="project" value="InterPro"/>
</dbReference>
<dbReference type="GO" id="GO:0003989">
    <property type="term" value="F:acetyl-CoA carboxylase activity"/>
    <property type="evidence" value="ECO:0007669"/>
    <property type="project" value="InterPro"/>
</dbReference>
<dbReference type="GO" id="GO:0005524">
    <property type="term" value="F:ATP binding"/>
    <property type="evidence" value="ECO:0007669"/>
    <property type="project" value="UniProtKB-KW"/>
</dbReference>
<dbReference type="GO" id="GO:0016743">
    <property type="term" value="F:carboxyl- or carbamoyltransferase activity"/>
    <property type="evidence" value="ECO:0007669"/>
    <property type="project" value="UniProtKB-UniRule"/>
</dbReference>
<dbReference type="GO" id="GO:0008270">
    <property type="term" value="F:zinc ion binding"/>
    <property type="evidence" value="ECO:0007669"/>
    <property type="project" value="UniProtKB-UniRule"/>
</dbReference>
<dbReference type="GO" id="GO:0006633">
    <property type="term" value="P:fatty acid biosynthetic process"/>
    <property type="evidence" value="ECO:0007669"/>
    <property type="project" value="UniProtKB-KW"/>
</dbReference>
<dbReference type="GO" id="GO:2001295">
    <property type="term" value="P:malonyl-CoA biosynthetic process"/>
    <property type="evidence" value="ECO:0007669"/>
    <property type="project" value="UniProtKB-UniRule"/>
</dbReference>
<dbReference type="Gene3D" id="3.90.226.10">
    <property type="entry name" value="2-enoyl-CoA Hydratase, Chain A, domain 1"/>
    <property type="match status" value="1"/>
</dbReference>
<dbReference type="HAMAP" id="MF_01395">
    <property type="entry name" value="AcetylCoA_CT_beta"/>
    <property type="match status" value="1"/>
</dbReference>
<dbReference type="InterPro" id="IPR034733">
    <property type="entry name" value="AcCoA_carboxyl_beta"/>
</dbReference>
<dbReference type="InterPro" id="IPR000438">
    <property type="entry name" value="Acetyl_CoA_COase_Trfase_b_su"/>
</dbReference>
<dbReference type="InterPro" id="IPR029045">
    <property type="entry name" value="ClpP/crotonase-like_dom_sf"/>
</dbReference>
<dbReference type="InterPro" id="IPR011762">
    <property type="entry name" value="COA_CT_N"/>
</dbReference>
<dbReference type="NCBIfam" id="TIGR00515">
    <property type="entry name" value="accD"/>
    <property type="match status" value="1"/>
</dbReference>
<dbReference type="PANTHER" id="PTHR42995">
    <property type="entry name" value="ACETYL-COENZYME A CARBOXYLASE CARBOXYL TRANSFERASE SUBUNIT BETA, CHLOROPLASTIC"/>
    <property type="match status" value="1"/>
</dbReference>
<dbReference type="PANTHER" id="PTHR42995:SF5">
    <property type="entry name" value="ACETYL-COENZYME A CARBOXYLASE CARBOXYL TRANSFERASE SUBUNIT BETA, CHLOROPLASTIC"/>
    <property type="match status" value="1"/>
</dbReference>
<dbReference type="Pfam" id="PF01039">
    <property type="entry name" value="Carboxyl_trans"/>
    <property type="match status" value="1"/>
</dbReference>
<dbReference type="PRINTS" id="PR01070">
    <property type="entry name" value="ACCCTRFRASEB"/>
</dbReference>
<dbReference type="SUPFAM" id="SSF52096">
    <property type="entry name" value="ClpP/crotonase"/>
    <property type="match status" value="1"/>
</dbReference>
<dbReference type="PROSITE" id="PS50980">
    <property type="entry name" value="COA_CT_NTER"/>
    <property type="match status" value="1"/>
</dbReference>
<organism>
    <name type="scientific">Streptococcus pyogenes serotype M1</name>
    <dbReference type="NCBI Taxonomy" id="301447"/>
    <lineage>
        <taxon>Bacteria</taxon>
        <taxon>Bacillati</taxon>
        <taxon>Bacillota</taxon>
        <taxon>Bacilli</taxon>
        <taxon>Lactobacillales</taxon>
        <taxon>Streptococcaceae</taxon>
        <taxon>Streptococcus</taxon>
    </lineage>
</organism>
<gene>
    <name evidence="1" type="primary">accD</name>
    <name type="ordered locus">SPy_1744</name>
    <name type="ordered locus">M5005_Spy1485</name>
</gene>
<accession>Q99YE0</accession>
<accession>Q48X22</accession>
<keyword id="KW-0067">ATP-binding</keyword>
<keyword id="KW-0963">Cytoplasm</keyword>
<keyword id="KW-0275">Fatty acid biosynthesis</keyword>
<keyword id="KW-0276">Fatty acid metabolism</keyword>
<keyword id="KW-0444">Lipid biosynthesis</keyword>
<keyword id="KW-0443">Lipid metabolism</keyword>
<keyword id="KW-0479">Metal-binding</keyword>
<keyword id="KW-0547">Nucleotide-binding</keyword>
<keyword id="KW-1185">Reference proteome</keyword>
<keyword id="KW-0808">Transferase</keyword>
<keyword id="KW-0862">Zinc</keyword>
<keyword id="KW-0863">Zinc-finger</keyword>
<sequence>MALFRKKDKYIRITPNNSLKGSVSHNVPEVPDELFAKCPACKHMIYKKDLGLAKICPTCSYNFRISAQERLTLTVDEGSFQELFTSIETKDPLRFPGYQEKLQKAKETTGLHEAVLTGKAMVKEQKIALAIMDSHFIMASMGTVVGEKITRLFELAIEENLPVVIFTASGGARMQEGIMSLMQMAKVSAAVKRHSNAGLFYLTILTDPTTGGVTASFAMEGDIILAEPQSLVGFAGRRVIETTVRENLPDDFQKAEFLQDHGFVDAIVKRTELRDKIAHLVAFHGGGQ</sequence>
<proteinExistence type="inferred from homology"/>
<name>ACCD_STRP1</name>
<evidence type="ECO:0000255" key="1">
    <source>
        <dbReference type="HAMAP-Rule" id="MF_01395"/>
    </source>
</evidence>
<evidence type="ECO:0000255" key="2">
    <source>
        <dbReference type="PROSITE-ProRule" id="PRU01136"/>
    </source>
</evidence>
<feature type="chain" id="PRO_0000389873" description="Acetyl-coenzyme A carboxylase carboxyl transferase subunit beta">
    <location>
        <begin position="1"/>
        <end position="288"/>
    </location>
</feature>
<feature type="domain" description="CoA carboxyltransferase N-terminal" evidence="2">
    <location>
        <begin position="34"/>
        <end position="288"/>
    </location>
</feature>
<feature type="zinc finger region" description="C4-type" evidence="1">
    <location>
        <begin position="38"/>
        <end position="59"/>
    </location>
</feature>
<feature type="binding site" evidence="1">
    <location>
        <position position="38"/>
    </location>
    <ligand>
        <name>Zn(2+)</name>
        <dbReference type="ChEBI" id="CHEBI:29105"/>
    </ligand>
</feature>
<feature type="binding site" evidence="1">
    <location>
        <position position="41"/>
    </location>
    <ligand>
        <name>Zn(2+)</name>
        <dbReference type="ChEBI" id="CHEBI:29105"/>
    </ligand>
</feature>
<feature type="binding site" evidence="1">
    <location>
        <position position="56"/>
    </location>
    <ligand>
        <name>Zn(2+)</name>
        <dbReference type="ChEBI" id="CHEBI:29105"/>
    </ligand>
</feature>
<feature type="binding site" evidence="1">
    <location>
        <position position="59"/>
    </location>
    <ligand>
        <name>Zn(2+)</name>
        <dbReference type="ChEBI" id="CHEBI:29105"/>
    </ligand>
</feature>
<reference key="1">
    <citation type="journal article" date="2001" name="Proc. Natl. Acad. Sci. U.S.A.">
        <title>Complete genome sequence of an M1 strain of Streptococcus pyogenes.</title>
        <authorList>
            <person name="Ferretti J.J."/>
            <person name="McShan W.M."/>
            <person name="Ajdic D.J."/>
            <person name="Savic D.J."/>
            <person name="Savic G."/>
            <person name="Lyon K."/>
            <person name="Primeaux C."/>
            <person name="Sezate S."/>
            <person name="Suvorov A.N."/>
            <person name="Kenton S."/>
            <person name="Lai H.S."/>
            <person name="Lin S.P."/>
            <person name="Qian Y."/>
            <person name="Jia H.G."/>
            <person name="Najar F.Z."/>
            <person name="Ren Q."/>
            <person name="Zhu H."/>
            <person name="Song L."/>
            <person name="White J."/>
            <person name="Yuan X."/>
            <person name="Clifton S.W."/>
            <person name="Roe B.A."/>
            <person name="McLaughlin R.E."/>
        </authorList>
    </citation>
    <scope>NUCLEOTIDE SEQUENCE [LARGE SCALE GENOMIC DNA]</scope>
    <source>
        <strain>ATCC 700294 / SF370 / Serotype M1</strain>
    </source>
</reference>
<reference key="2">
    <citation type="journal article" date="2005" name="J. Infect. Dis.">
        <title>Evolutionary origin and emergence of a highly successful clone of serotype M1 group A Streptococcus involved multiple horizontal gene transfer events.</title>
        <authorList>
            <person name="Sumby P."/>
            <person name="Porcella S.F."/>
            <person name="Madrigal A.G."/>
            <person name="Barbian K.D."/>
            <person name="Virtaneva K."/>
            <person name="Ricklefs S.M."/>
            <person name="Sturdevant D.E."/>
            <person name="Graham M.R."/>
            <person name="Vuopio-Varkila J."/>
            <person name="Hoe N.P."/>
            <person name="Musser J.M."/>
        </authorList>
    </citation>
    <scope>NUCLEOTIDE SEQUENCE [LARGE SCALE GENOMIC DNA]</scope>
    <source>
        <strain>ATCC BAA-947 / MGAS5005 / Serotype M1</strain>
    </source>
</reference>